<protein>
    <recommendedName>
        <fullName evidence="4">C6 finger domain transcription factor adaR</fullName>
    </recommendedName>
    <alternativeName>
        <fullName evidence="4">2-acetyl-2-decarboxamidoanthrotainin biosynthesis cluster protein R</fullName>
    </alternativeName>
</protein>
<sequence>MEQRSSPARSLPPRKTTTTPQLSCELCRKRKVKCDKLTPCTNCAASGTVCVPIYRTRLPRGRHATRPRRVSSPPPTSAPGETDRIIQPSVPVNEDLQERIYRLEALIQGMNSHSHTRTPSATSREQSVQLSDTSTFQTAPNPNTSPILNSSIVSKRLMLQRPDQFWADLVDEIHGLREVVESSLAGGQEGPIPSSDSAKSEPPNDDGIQVLGLGASNPSAALRSMSPLHNPVVARQLCEVYLQQVDPVIKILHRPSLNRWMVQGEPYLSYADGHPAVEALGSAVCYSAISSMTDNQCSVMFHANKADLLAEARVACETAIGRAGLLTTRDITVLQAFVLYLVARRSEDRTPAVWTLIALAVRIGKGLGLYLDPETETFFDQQIRRRLWFTICLMDLQASFGQASEPLISVDESASTALPQHINDSDFDPTTAAHSDPNREGLTDTTFALVTYHAQRTGRLLNFVQHDRKVDGGIPTPTSSTSGTSTSRSRTCDPSWPQQQARHFEQEALRLLHFCDPGTSAYAWFTWHGTQSLIATVRLAAARPLQWHGQAPPPRREGNTELLRLCLPVLEKAQLMHTDPRAEGFRWYVTIPWYALAMALAECYVSSDTALVRYAWPLVESSYLQYEATLGQSLGGPFGQLMRRMKEKLAAPAALPPSSLPSTNWSPATPPTFPGVPRPQSSHDDRHAPGCSWPVPTGSTPPADLGVPSLLPVSTWEALSPPSLDNPSLFGVPPTTTAVADGMDPGADIMWEELFSGIPFNEIAGPDTFFFDMNWGS</sequence>
<evidence type="ECO:0000255" key="1">
    <source>
        <dbReference type="PROSITE-ProRule" id="PRU00227"/>
    </source>
</evidence>
<evidence type="ECO:0000256" key="2">
    <source>
        <dbReference type="SAM" id="MobiDB-lite"/>
    </source>
</evidence>
<evidence type="ECO:0000269" key="3">
    <source>
    </source>
</evidence>
<evidence type="ECO:0000303" key="4">
    <source>
    </source>
</evidence>
<gene>
    <name evidence="4" type="primary">adaR</name>
    <name type="ORF">ATCC64974_92740</name>
</gene>
<feature type="chain" id="PRO_0000446343" description="C6 finger domain transcription factor adaR">
    <location>
        <begin position="1"/>
        <end position="777"/>
    </location>
</feature>
<feature type="DNA-binding region" description="Zn(2)-C6 fungal-type" evidence="1">
    <location>
        <begin position="24"/>
        <end position="50"/>
    </location>
</feature>
<feature type="region of interest" description="Disordered" evidence="2">
    <location>
        <begin position="1"/>
        <end position="20"/>
    </location>
</feature>
<feature type="region of interest" description="Disordered" evidence="2">
    <location>
        <begin position="61"/>
        <end position="85"/>
    </location>
</feature>
<feature type="region of interest" description="Disordered" evidence="2">
    <location>
        <begin position="111"/>
        <end position="144"/>
    </location>
</feature>
<feature type="region of interest" description="Disordered" evidence="2">
    <location>
        <begin position="182"/>
        <end position="213"/>
    </location>
</feature>
<feature type="region of interest" description="Disordered" evidence="2">
    <location>
        <begin position="419"/>
        <end position="440"/>
    </location>
</feature>
<feature type="region of interest" description="Disordered" evidence="2">
    <location>
        <begin position="468"/>
        <end position="496"/>
    </location>
</feature>
<feature type="region of interest" description="Disordered" evidence="2">
    <location>
        <begin position="655"/>
        <end position="699"/>
    </location>
</feature>
<feature type="compositionally biased region" description="Low complexity" evidence="2">
    <location>
        <begin position="475"/>
        <end position="489"/>
    </location>
</feature>
<feature type="compositionally biased region" description="Pro residues" evidence="2">
    <location>
        <begin position="668"/>
        <end position="677"/>
    </location>
</feature>
<organism>
    <name type="scientific">Aspergillus niger</name>
    <dbReference type="NCBI Taxonomy" id="5061"/>
    <lineage>
        <taxon>Eukaryota</taxon>
        <taxon>Fungi</taxon>
        <taxon>Dikarya</taxon>
        <taxon>Ascomycota</taxon>
        <taxon>Pezizomycotina</taxon>
        <taxon>Eurotiomycetes</taxon>
        <taxon>Eurotiomycetidae</taxon>
        <taxon>Eurotiales</taxon>
        <taxon>Aspergillaceae</taxon>
        <taxon>Aspergillus</taxon>
        <taxon>Aspergillus subgen. Circumdati</taxon>
    </lineage>
</organism>
<comment type="function">
    <text evidence="3">Transcription factor that specifically regulates the expression of the ada gene cluster involved in the biosynthesis of the linear tetracyclic TAN-1612 neuropeptide Y receptor antagonist.</text>
</comment>
<comment type="subcellular location">
    <subcellularLocation>
        <location evidence="1">Nucleus</location>
    </subcellularLocation>
</comment>
<keyword id="KW-0238">DNA-binding</keyword>
<keyword id="KW-0479">Metal-binding</keyword>
<keyword id="KW-0539">Nucleus</keyword>
<keyword id="KW-0804">Transcription</keyword>
<keyword id="KW-0805">Transcription regulation</keyword>
<keyword id="KW-0862">Zinc</keyword>
<reference key="1">
    <citation type="journal article" date="2011" name="J. Am. Chem. Soc.">
        <title>Comparative characterization of fungal anthracenone and naphthacenedione biosynthetic pathways reveals an alpha-hydroxylation-dependent Claisen-like cyclization catalyzed by a dimanganese thioesterase.</title>
        <authorList>
            <person name="Li Y."/>
            <person name="Chooi Y.H."/>
            <person name="Sheng Y."/>
            <person name="Valentine J.S."/>
            <person name="Tang Y."/>
        </authorList>
    </citation>
    <scope>NUCLEOTIDE SEQUENCE [GENOMIC DNA]</scope>
    <scope>IDENTIFICATION</scope>
    <scope>FUNCTION</scope>
    <source>
        <strain>ATCC 1015 / NV DSM 2061</strain>
    </source>
</reference>
<reference key="2">
    <citation type="journal article" date="2018" name="Front. Microbiol.">
        <title>Forward genetics by genome sequencing uncovers the central role of the Aspergillus niger goxB locus in hydrogen peroxide induced glucose oxidase expression.</title>
        <authorList>
            <person name="Laothanachareon T."/>
            <person name="Tamayo-Ramos J.A."/>
            <person name="Nijsse B."/>
            <person name="Schaap P.J."/>
        </authorList>
    </citation>
    <scope>NUCLEOTIDE SEQUENCE [LARGE SCALE GENOMIC DNA]</scope>
    <source>
        <strain>ATCC 64974 / FGSC A733 / N402</strain>
    </source>
</reference>
<dbReference type="EMBL" id="JN257714">
    <property type="protein sequence ID" value="AEN83885.1"/>
    <property type="molecule type" value="Genomic_DNA"/>
</dbReference>
<dbReference type="EMBL" id="OGUI01000016">
    <property type="protein sequence ID" value="SPB51664.1"/>
    <property type="molecule type" value="Genomic_DNA"/>
</dbReference>
<dbReference type="PaxDb" id="5061-CADANGAP00008891"/>
<dbReference type="EnsemblFungi" id="CAK40782">
    <property type="protein sequence ID" value="CAK40782"/>
    <property type="gene ID" value="An11g07350"/>
</dbReference>
<dbReference type="VEuPathDB" id="FungiDB:An11g07350"/>
<dbReference type="VEuPathDB" id="FungiDB:ASPNIDRAFT2_1187773"/>
<dbReference type="VEuPathDB" id="FungiDB:ATCC64974_92740"/>
<dbReference type="VEuPathDB" id="FungiDB:M747DRAFT_298767"/>
<dbReference type="GO" id="GO:0005634">
    <property type="term" value="C:nucleus"/>
    <property type="evidence" value="ECO:0007669"/>
    <property type="project" value="UniProtKB-SubCell"/>
</dbReference>
<dbReference type="GO" id="GO:0003677">
    <property type="term" value="F:DNA binding"/>
    <property type="evidence" value="ECO:0007669"/>
    <property type="project" value="UniProtKB-KW"/>
</dbReference>
<dbReference type="GO" id="GO:0000981">
    <property type="term" value="F:DNA-binding transcription factor activity, RNA polymerase II-specific"/>
    <property type="evidence" value="ECO:0007669"/>
    <property type="project" value="InterPro"/>
</dbReference>
<dbReference type="GO" id="GO:0008270">
    <property type="term" value="F:zinc ion binding"/>
    <property type="evidence" value="ECO:0007669"/>
    <property type="project" value="InterPro"/>
</dbReference>
<dbReference type="GO" id="GO:0006351">
    <property type="term" value="P:DNA-templated transcription"/>
    <property type="evidence" value="ECO:0007669"/>
    <property type="project" value="InterPro"/>
</dbReference>
<dbReference type="GO" id="GO:0009893">
    <property type="term" value="P:positive regulation of metabolic process"/>
    <property type="evidence" value="ECO:0007669"/>
    <property type="project" value="UniProtKB-ARBA"/>
</dbReference>
<dbReference type="CDD" id="cd12148">
    <property type="entry name" value="fungal_TF_MHR"/>
    <property type="match status" value="1"/>
</dbReference>
<dbReference type="CDD" id="cd00067">
    <property type="entry name" value="GAL4"/>
    <property type="match status" value="1"/>
</dbReference>
<dbReference type="Gene3D" id="4.10.240.10">
    <property type="entry name" value="Zn(2)-C6 fungal-type DNA-binding domain"/>
    <property type="match status" value="1"/>
</dbReference>
<dbReference type="InterPro" id="IPR050613">
    <property type="entry name" value="Sec_Metabolite_Reg"/>
</dbReference>
<dbReference type="InterPro" id="IPR007219">
    <property type="entry name" value="Transcription_factor_dom_fun"/>
</dbReference>
<dbReference type="InterPro" id="IPR036864">
    <property type="entry name" value="Zn2-C6_fun-type_DNA-bd_sf"/>
</dbReference>
<dbReference type="InterPro" id="IPR001138">
    <property type="entry name" value="Zn2Cys6_DnaBD"/>
</dbReference>
<dbReference type="PANTHER" id="PTHR31001">
    <property type="entry name" value="UNCHARACTERIZED TRANSCRIPTIONAL REGULATORY PROTEIN"/>
    <property type="match status" value="1"/>
</dbReference>
<dbReference type="PANTHER" id="PTHR31001:SF50">
    <property type="entry name" value="ZN(II)2CYS6 TRANSCRIPTION FACTOR (EUROFUNG)"/>
    <property type="match status" value="1"/>
</dbReference>
<dbReference type="Pfam" id="PF04082">
    <property type="entry name" value="Fungal_trans"/>
    <property type="match status" value="1"/>
</dbReference>
<dbReference type="Pfam" id="PF00172">
    <property type="entry name" value="Zn_clus"/>
    <property type="match status" value="1"/>
</dbReference>
<dbReference type="SMART" id="SM00906">
    <property type="entry name" value="Fungal_trans"/>
    <property type="match status" value="1"/>
</dbReference>
<dbReference type="SMART" id="SM00066">
    <property type="entry name" value="GAL4"/>
    <property type="match status" value="1"/>
</dbReference>
<dbReference type="SUPFAM" id="SSF57701">
    <property type="entry name" value="Zn2/Cys6 DNA-binding domain"/>
    <property type="match status" value="1"/>
</dbReference>
<dbReference type="PROSITE" id="PS00463">
    <property type="entry name" value="ZN2_CY6_FUNGAL_1"/>
    <property type="match status" value="1"/>
</dbReference>
<dbReference type="PROSITE" id="PS50048">
    <property type="entry name" value="ZN2_CY6_FUNGAL_2"/>
    <property type="match status" value="1"/>
</dbReference>
<accession>G3KLH2</accession>
<proteinExistence type="inferred from homology"/>
<name>ADAR_ASPNG</name>